<gene>
    <name type="primary">AIM36</name>
    <name type="synonym">FMP39</name>
    <name type="ORF">CLUG_00126</name>
</gene>
<organism>
    <name type="scientific">Clavispora lusitaniae (strain ATCC 42720)</name>
    <name type="common">Yeast</name>
    <name type="synonym">Candida lusitaniae</name>
    <dbReference type="NCBI Taxonomy" id="306902"/>
    <lineage>
        <taxon>Eukaryota</taxon>
        <taxon>Fungi</taxon>
        <taxon>Dikarya</taxon>
        <taxon>Ascomycota</taxon>
        <taxon>Saccharomycotina</taxon>
        <taxon>Pichiomycetes</taxon>
        <taxon>Metschnikowiaceae</taxon>
        <taxon>Clavispora</taxon>
    </lineage>
</organism>
<reference key="1">
    <citation type="journal article" date="2009" name="Nature">
        <title>Evolution of pathogenicity and sexual reproduction in eight Candida genomes.</title>
        <authorList>
            <person name="Butler G."/>
            <person name="Rasmussen M.D."/>
            <person name="Lin M.F."/>
            <person name="Santos M.A.S."/>
            <person name="Sakthikumar S."/>
            <person name="Munro C.A."/>
            <person name="Rheinbay E."/>
            <person name="Grabherr M."/>
            <person name="Forche A."/>
            <person name="Reedy J.L."/>
            <person name="Agrafioti I."/>
            <person name="Arnaud M.B."/>
            <person name="Bates S."/>
            <person name="Brown A.J.P."/>
            <person name="Brunke S."/>
            <person name="Costanzo M.C."/>
            <person name="Fitzpatrick D.A."/>
            <person name="de Groot P.W.J."/>
            <person name="Harris D."/>
            <person name="Hoyer L.L."/>
            <person name="Hube B."/>
            <person name="Klis F.M."/>
            <person name="Kodira C."/>
            <person name="Lennard N."/>
            <person name="Logue M.E."/>
            <person name="Martin R."/>
            <person name="Neiman A.M."/>
            <person name="Nikolaou E."/>
            <person name="Quail M.A."/>
            <person name="Quinn J."/>
            <person name="Santos M.C."/>
            <person name="Schmitzberger F.F."/>
            <person name="Sherlock G."/>
            <person name="Shah P."/>
            <person name="Silverstein K.A.T."/>
            <person name="Skrzypek M.S."/>
            <person name="Soll D."/>
            <person name="Staggs R."/>
            <person name="Stansfield I."/>
            <person name="Stumpf M.P.H."/>
            <person name="Sudbery P.E."/>
            <person name="Srikantha T."/>
            <person name="Zeng Q."/>
            <person name="Berman J."/>
            <person name="Berriman M."/>
            <person name="Heitman J."/>
            <person name="Gow N.A.R."/>
            <person name="Lorenz M.C."/>
            <person name="Birren B.W."/>
            <person name="Kellis M."/>
            <person name="Cuomo C.A."/>
        </authorList>
    </citation>
    <scope>NUCLEOTIDE SEQUENCE [LARGE SCALE GENOMIC DNA]</scope>
    <source>
        <strain>ATCC 42720</strain>
    </source>
</reference>
<comment type="subcellular location">
    <subcellularLocation>
        <location evidence="1">Mitochondrion membrane</location>
        <topology evidence="1">Single-pass membrane protein</topology>
    </subcellularLocation>
</comment>
<comment type="similarity">
    <text evidence="3">Belongs to the AIM36 family.</text>
</comment>
<keyword id="KW-0472">Membrane</keyword>
<keyword id="KW-0496">Mitochondrion</keyword>
<keyword id="KW-1185">Reference proteome</keyword>
<keyword id="KW-0809">Transit peptide</keyword>
<keyword id="KW-0812">Transmembrane</keyword>
<keyword id="KW-1133">Transmembrane helix</keyword>
<evidence type="ECO:0000250" key="1"/>
<evidence type="ECO:0000255" key="2"/>
<evidence type="ECO:0000305" key="3"/>
<protein>
    <recommendedName>
        <fullName>Altered inheritance of mitochondria protein 36, mitochondrial</fullName>
    </recommendedName>
    <alternativeName>
        <fullName>Found in mitochondria protein 39</fullName>
    </alternativeName>
</protein>
<name>AIM36_CLAL4</name>
<feature type="transit peptide" description="Mitochondrion" evidence="2">
    <location>
        <begin position="1"/>
        <end position="47"/>
    </location>
</feature>
<feature type="chain" id="PRO_0000399724" description="Altered inheritance of mitochondria protein 36, mitochondrial">
    <location>
        <begin position="48"/>
        <end position="283"/>
    </location>
</feature>
<feature type="transmembrane region" description="Helical" evidence="2">
    <location>
        <begin position="63"/>
        <end position="82"/>
    </location>
</feature>
<dbReference type="EMBL" id="CH408076">
    <property type="protein sequence ID" value="EEQ36003.1"/>
    <property type="molecule type" value="Genomic_DNA"/>
</dbReference>
<dbReference type="RefSeq" id="XP_002618967.1">
    <property type="nucleotide sequence ID" value="XM_002618921.1"/>
</dbReference>
<dbReference type="FunCoup" id="C4XW03">
    <property type="interactions" value="18"/>
</dbReference>
<dbReference type="GeneID" id="8499534"/>
<dbReference type="KEGG" id="clu:CLUG_00126"/>
<dbReference type="VEuPathDB" id="FungiDB:CLUG_00126"/>
<dbReference type="HOGENOM" id="CLU_997550_0_0_1"/>
<dbReference type="InParanoid" id="C4XW03"/>
<dbReference type="OMA" id="INNVVGY"/>
<dbReference type="OrthoDB" id="111622at4891"/>
<dbReference type="Proteomes" id="UP000007703">
    <property type="component" value="Unassembled WGS sequence"/>
</dbReference>
<dbReference type="GO" id="GO:0031966">
    <property type="term" value="C:mitochondrial membrane"/>
    <property type="evidence" value="ECO:0007669"/>
    <property type="project" value="UniProtKB-SubCell"/>
</dbReference>
<dbReference type="Gene3D" id="3.40.50.300">
    <property type="entry name" value="P-loop containing nucleotide triphosphate hydrolases"/>
    <property type="match status" value="1"/>
</dbReference>
<dbReference type="InterPro" id="IPR027417">
    <property type="entry name" value="P-loop_NTPase"/>
</dbReference>
<accession>C4XW03</accession>
<proteinExistence type="inferred from homology"/>
<sequence>MARYKRPTSPKFQRAINMFRLVAGKRPPVRTVLSRGIPCPSFAKAFYSTPQRKIRKPEEGPKIRYLVLVVFASFGLLHFVTTQVDKKAPKNSFTEREFEQYERETGLRRRHKLINHEKNDQYAFYAVPYAHDVSKAVQLLTKMLPNEKQVKVIDPKQLIEKELEDEGKYSYLLQDLLAYKKPLPRGLITALMKQEIELFLNTTKGQFDTNILLMNYPQSTDEAIKFENDVSELKTCIVLEDDFAKSLHDDLSDDDVRKVNNVVGYFDTVGKAEKVNSKVKVLN</sequence>